<comment type="function">
    <text evidence="1">One of the essential components for the initiation of protein synthesis. Stabilizes the binding of IF-2 and IF-3 on the 30S subunit to which N-formylmethionyl-tRNA(fMet) subsequently binds. Helps modulate mRNA selection, yielding the 30S pre-initiation complex (PIC). Upon addition of the 50S ribosomal subunit IF-1, IF-2 and IF-3 are released leaving the mature 70S translation initiation complex.</text>
</comment>
<comment type="subunit">
    <text evidence="1">Component of the 30S ribosomal translation pre-initiation complex which assembles on the 30S ribosome in the order IF-2 and IF-3, IF-1 and N-formylmethionyl-tRNA(fMet); mRNA recruitment can occur at any time during PIC assembly.</text>
</comment>
<comment type="subcellular location">
    <subcellularLocation>
        <location evidence="1">Cytoplasm</location>
    </subcellularLocation>
</comment>
<comment type="similarity">
    <text evidence="1">Belongs to the IF-1 family.</text>
</comment>
<reference key="1">
    <citation type="journal article" date="1995" name="Science">
        <title>The minimal gene complement of Mycoplasma genitalium.</title>
        <authorList>
            <person name="Fraser C.M."/>
            <person name="Gocayne J.D."/>
            <person name="White O."/>
            <person name="Adams M.D."/>
            <person name="Clayton R.A."/>
            <person name="Fleischmann R.D."/>
            <person name="Bult C.J."/>
            <person name="Kerlavage A.R."/>
            <person name="Sutton G.G."/>
            <person name="Kelley J.M."/>
            <person name="Fritchman J.L."/>
            <person name="Weidman J.F."/>
            <person name="Small K.V."/>
            <person name="Sandusky M."/>
            <person name="Fuhrmann J.L."/>
            <person name="Nguyen D.T."/>
            <person name="Utterback T.R."/>
            <person name="Saudek D.M."/>
            <person name="Phillips C.A."/>
            <person name="Merrick J.M."/>
            <person name="Tomb J.-F."/>
            <person name="Dougherty B.A."/>
            <person name="Bott K.F."/>
            <person name="Hu P.-C."/>
            <person name="Lucier T.S."/>
            <person name="Peterson S.N."/>
            <person name="Smith H.O."/>
            <person name="Hutchison C.A. III"/>
            <person name="Venter J.C."/>
        </authorList>
    </citation>
    <scope>NUCLEOTIDE SEQUENCE [LARGE SCALE GENOMIC DNA]</scope>
    <source>
        <strain>ATCC 33530 / DSM 19775 / NCTC 10195 / G37</strain>
    </source>
</reference>
<gene>
    <name evidence="1" type="primary">infA</name>
    <name type="ordered locus">MG173</name>
</gene>
<proteinExistence type="inferred from homology"/>
<keyword id="KW-0963">Cytoplasm</keyword>
<keyword id="KW-0396">Initiation factor</keyword>
<keyword id="KW-0648">Protein biosynthesis</keyword>
<keyword id="KW-1185">Reference proteome</keyword>
<keyword id="KW-0694">RNA-binding</keyword>
<keyword id="KW-0699">rRNA-binding</keyword>
<sequence>MKNDKLFLTGKILEIIHGDKYRVMLENNVEVDAHLAGKMKMKRTKILPGDVVEVEFSPYDLKLGRITQRK</sequence>
<protein>
    <recommendedName>
        <fullName evidence="1">Translation initiation factor IF-1</fullName>
    </recommendedName>
</protein>
<organism>
    <name type="scientific">Mycoplasma genitalium (strain ATCC 33530 / DSM 19775 / NCTC 10195 / G37)</name>
    <name type="common">Mycoplasmoides genitalium</name>
    <dbReference type="NCBI Taxonomy" id="243273"/>
    <lineage>
        <taxon>Bacteria</taxon>
        <taxon>Bacillati</taxon>
        <taxon>Mycoplasmatota</taxon>
        <taxon>Mycoplasmoidales</taxon>
        <taxon>Mycoplasmoidaceae</taxon>
        <taxon>Mycoplasmoides</taxon>
    </lineage>
</organism>
<accession>P47419</accession>
<name>IF1_MYCGE</name>
<feature type="chain" id="PRO_0000095820" description="Translation initiation factor IF-1">
    <location>
        <begin position="1"/>
        <end position="70"/>
    </location>
</feature>
<feature type="domain" description="S1-like" evidence="1">
    <location>
        <begin position="1"/>
        <end position="70"/>
    </location>
</feature>
<evidence type="ECO:0000255" key="1">
    <source>
        <dbReference type="HAMAP-Rule" id="MF_00075"/>
    </source>
</evidence>
<dbReference type="EMBL" id="L43967">
    <property type="protein sequence ID" value="AAC71391.1"/>
    <property type="molecule type" value="Genomic_DNA"/>
</dbReference>
<dbReference type="PIR" id="B64219">
    <property type="entry name" value="B64219"/>
</dbReference>
<dbReference type="RefSeq" id="WP_009885858.1">
    <property type="nucleotide sequence ID" value="NC_000908.2"/>
</dbReference>
<dbReference type="SMR" id="P47419"/>
<dbReference type="FunCoup" id="P47419">
    <property type="interactions" value="120"/>
</dbReference>
<dbReference type="STRING" id="243273.MG_173"/>
<dbReference type="GeneID" id="88282306"/>
<dbReference type="KEGG" id="mge:MG_173"/>
<dbReference type="eggNOG" id="COG0361">
    <property type="taxonomic scope" value="Bacteria"/>
</dbReference>
<dbReference type="HOGENOM" id="CLU_151267_1_0_14"/>
<dbReference type="InParanoid" id="P47419"/>
<dbReference type="OrthoDB" id="9803250at2"/>
<dbReference type="BioCyc" id="MGEN243273:G1GJ2-197-MONOMER"/>
<dbReference type="Proteomes" id="UP000000807">
    <property type="component" value="Chromosome"/>
</dbReference>
<dbReference type="GO" id="GO:0005829">
    <property type="term" value="C:cytosol"/>
    <property type="evidence" value="ECO:0000318"/>
    <property type="project" value="GO_Central"/>
</dbReference>
<dbReference type="GO" id="GO:0043022">
    <property type="term" value="F:ribosome binding"/>
    <property type="evidence" value="ECO:0000318"/>
    <property type="project" value="GO_Central"/>
</dbReference>
<dbReference type="GO" id="GO:0019843">
    <property type="term" value="F:rRNA binding"/>
    <property type="evidence" value="ECO:0007669"/>
    <property type="project" value="UniProtKB-UniRule"/>
</dbReference>
<dbReference type="GO" id="GO:0003743">
    <property type="term" value="F:translation initiation factor activity"/>
    <property type="evidence" value="ECO:0007669"/>
    <property type="project" value="UniProtKB-UniRule"/>
</dbReference>
<dbReference type="CDD" id="cd04451">
    <property type="entry name" value="S1_IF1"/>
    <property type="match status" value="1"/>
</dbReference>
<dbReference type="Gene3D" id="2.40.50.140">
    <property type="entry name" value="Nucleic acid-binding proteins"/>
    <property type="match status" value="1"/>
</dbReference>
<dbReference type="HAMAP" id="MF_00075">
    <property type="entry name" value="IF_1"/>
    <property type="match status" value="1"/>
</dbReference>
<dbReference type="InterPro" id="IPR012340">
    <property type="entry name" value="NA-bd_OB-fold"/>
</dbReference>
<dbReference type="InterPro" id="IPR006196">
    <property type="entry name" value="RNA-binding_domain_S1_IF1"/>
</dbReference>
<dbReference type="InterPro" id="IPR004368">
    <property type="entry name" value="TIF_IF1"/>
</dbReference>
<dbReference type="NCBIfam" id="TIGR00008">
    <property type="entry name" value="infA"/>
    <property type="match status" value="1"/>
</dbReference>
<dbReference type="PANTHER" id="PTHR33370">
    <property type="entry name" value="TRANSLATION INITIATION FACTOR IF-1, CHLOROPLASTIC"/>
    <property type="match status" value="1"/>
</dbReference>
<dbReference type="PANTHER" id="PTHR33370:SF1">
    <property type="entry name" value="TRANSLATION INITIATION FACTOR IF-1, CHLOROPLASTIC"/>
    <property type="match status" value="1"/>
</dbReference>
<dbReference type="Pfam" id="PF01176">
    <property type="entry name" value="eIF-1a"/>
    <property type="match status" value="1"/>
</dbReference>
<dbReference type="SUPFAM" id="SSF50249">
    <property type="entry name" value="Nucleic acid-binding proteins"/>
    <property type="match status" value="1"/>
</dbReference>
<dbReference type="PROSITE" id="PS50832">
    <property type="entry name" value="S1_IF1_TYPE"/>
    <property type="match status" value="1"/>
</dbReference>